<name>GHRB_YERPG</name>
<protein>
    <recommendedName>
        <fullName evidence="1">Glyoxylate/hydroxypyruvate reductase B</fullName>
        <ecNumber evidence="1">1.1.1.79</ecNumber>
        <ecNumber evidence="1">1.1.1.81</ecNumber>
    </recommendedName>
</protein>
<gene>
    <name evidence="1" type="primary">ghrB</name>
    <name type="ordered locus">YpAngola_A3789</name>
</gene>
<comment type="function">
    <text evidence="1">Catalyzes the NADPH-dependent reduction of glyoxylate and hydroxypyruvate into glycolate and glycerate, respectively.</text>
</comment>
<comment type="catalytic activity">
    <reaction evidence="1">
        <text>glycolate + NADP(+) = glyoxylate + NADPH + H(+)</text>
        <dbReference type="Rhea" id="RHEA:10992"/>
        <dbReference type="ChEBI" id="CHEBI:15378"/>
        <dbReference type="ChEBI" id="CHEBI:29805"/>
        <dbReference type="ChEBI" id="CHEBI:36655"/>
        <dbReference type="ChEBI" id="CHEBI:57783"/>
        <dbReference type="ChEBI" id="CHEBI:58349"/>
        <dbReference type="EC" id="1.1.1.79"/>
    </reaction>
</comment>
<comment type="catalytic activity">
    <reaction evidence="1">
        <text>(R)-glycerate + NAD(+) = 3-hydroxypyruvate + NADH + H(+)</text>
        <dbReference type="Rhea" id="RHEA:17905"/>
        <dbReference type="ChEBI" id="CHEBI:15378"/>
        <dbReference type="ChEBI" id="CHEBI:16659"/>
        <dbReference type="ChEBI" id="CHEBI:17180"/>
        <dbReference type="ChEBI" id="CHEBI:57540"/>
        <dbReference type="ChEBI" id="CHEBI:57945"/>
        <dbReference type="EC" id="1.1.1.81"/>
    </reaction>
</comment>
<comment type="catalytic activity">
    <reaction evidence="1">
        <text>(R)-glycerate + NADP(+) = 3-hydroxypyruvate + NADPH + H(+)</text>
        <dbReference type="Rhea" id="RHEA:18657"/>
        <dbReference type="ChEBI" id="CHEBI:15378"/>
        <dbReference type="ChEBI" id="CHEBI:16659"/>
        <dbReference type="ChEBI" id="CHEBI:17180"/>
        <dbReference type="ChEBI" id="CHEBI:57783"/>
        <dbReference type="ChEBI" id="CHEBI:58349"/>
        <dbReference type="EC" id="1.1.1.81"/>
    </reaction>
</comment>
<comment type="subunit">
    <text evidence="1">Homodimer.</text>
</comment>
<comment type="subcellular location">
    <subcellularLocation>
        <location evidence="1">Cytoplasm</location>
    </subcellularLocation>
</comment>
<comment type="similarity">
    <text evidence="1">Belongs to the D-isomer specific 2-hydroxyacid dehydrogenase family. GhrB subfamily.</text>
</comment>
<feature type="chain" id="PRO_0000348408" description="Glyoxylate/hydroxypyruvate reductase B">
    <location>
        <begin position="1"/>
        <end position="326"/>
    </location>
</feature>
<feature type="active site" evidence="1">
    <location>
        <position position="237"/>
    </location>
</feature>
<feature type="active site" evidence="1">
    <location>
        <position position="266"/>
    </location>
</feature>
<feature type="active site" description="Proton donor" evidence="1">
    <location>
        <position position="285"/>
    </location>
</feature>
<proteinExistence type="inferred from homology"/>
<sequence length="326" mass="35465">MKPSIVLYKSIPTDLHQRLAQHFTVNSFDGLTPDNQPELLAALQQAEGLIGSGGKIDQDFLQLAPNLRAASTISVGYDNFDVEALSQRGIALMHTPTVLTETVADTMMALMLSTARRVVELAERVKAGEWQESIGDDWFGVDVHHKTIGILGMGRIGMALAQRAHFGFSMPVLYTSRRPHEAAEQRFGARHCSLDTLLAEADFLCITLPMTEQTYHMIGREQLAKMKSSAILINAGRGPVVDEQALIAALQDGTIHAAGLDVFEQEPLPVDSPLLTLRNVVAVPHIGSATHETRYNMAACAVDNLINALTGTVKENCVNPQVLITH</sequence>
<evidence type="ECO:0000255" key="1">
    <source>
        <dbReference type="HAMAP-Rule" id="MF_01667"/>
    </source>
</evidence>
<reference key="1">
    <citation type="journal article" date="2010" name="J. Bacteriol.">
        <title>Genome sequence of the deep-rooted Yersinia pestis strain Angola reveals new insights into the evolution and pangenome of the plague bacterium.</title>
        <authorList>
            <person name="Eppinger M."/>
            <person name="Worsham P.L."/>
            <person name="Nikolich M.P."/>
            <person name="Riley D.R."/>
            <person name="Sebastian Y."/>
            <person name="Mou S."/>
            <person name="Achtman M."/>
            <person name="Lindler L.E."/>
            <person name="Ravel J."/>
        </authorList>
    </citation>
    <scope>NUCLEOTIDE SEQUENCE [LARGE SCALE GENOMIC DNA]</scope>
    <source>
        <strain>Angola</strain>
    </source>
</reference>
<dbReference type="EC" id="1.1.1.79" evidence="1"/>
<dbReference type="EC" id="1.1.1.81" evidence="1"/>
<dbReference type="EMBL" id="CP000901">
    <property type="protein sequence ID" value="ABX88502.1"/>
    <property type="molecule type" value="Genomic_DNA"/>
</dbReference>
<dbReference type="RefSeq" id="WP_002209630.1">
    <property type="nucleotide sequence ID" value="NZ_CP009935.1"/>
</dbReference>
<dbReference type="SMR" id="A9R4G6"/>
<dbReference type="GeneID" id="57974639"/>
<dbReference type="KEGG" id="ypg:YpAngola_A3789"/>
<dbReference type="PATRIC" id="fig|349746.12.peg.502"/>
<dbReference type="GO" id="GO:0005829">
    <property type="term" value="C:cytosol"/>
    <property type="evidence" value="ECO:0007669"/>
    <property type="project" value="TreeGrafter"/>
</dbReference>
<dbReference type="GO" id="GO:0005886">
    <property type="term" value="C:plasma membrane"/>
    <property type="evidence" value="ECO:0007669"/>
    <property type="project" value="UniProtKB-UniRule"/>
</dbReference>
<dbReference type="GO" id="GO:0030267">
    <property type="term" value="F:glyoxylate reductase (NADPH) activity"/>
    <property type="evidence" value="ECO:0007669"/>
    <property type="project" value="UniProtKB-UniRule"/>
</dbReference>
<dbReference type="GO" id="GO:0008465">
    <property type="term" value="F:hydroxypyruvate reductase (NADH) activity"/>
    <property type="evidence" value="ECO:0007669"/>
    <property type="project" value="RHEA"/>
</dbReference>
<dbReference type="GO" id="GO:0120509">
    <property type="term" value="F:hydroxypyruvate reductase (NADPH) activity"/>
    <property type="evidence" value="ECO:0007669"/>
    <property type="project" value="RHEA"/>
</dbReference>
<dbReference type="GO" id="GO:0051287">
    <property type="term" value="F:NAD binding"/>
    <property type="evidence" value="ECO:0007669"/>
    <property type="project" value="InterPro"/>
</dbReference>
<dbReference type="CDD" id="cd05301">
    <property type="entry name" value="GDH"/>
    <property type="match status" value="1"/>
</dbReference>
<dbReference type="FunFam" id="3.40.50.720:FF:000026">
    <property type="entry name" value="Glyoxylate/hydroxypyruvate reductase B"/>
    <property type="match status" value="1"/>
</dbReference>
<dbReference type="Gene3D" id="3.40.50.720">
    <property type="entry name" value="NAD(P)-binding Rossmann-like Domain"/>
    <property type="match status" value="2"/>
</dbReference>
<dbReference type="HAMAP" id="MF_01667">
    <property type="entry name" value="2_Hacid_dh_C_GhrB"/>
    <property type="match status" value="1"/>
</dbReference>
<dbReference type="InterPro" id="IPR050223">
    <property type="entry name" value="D-isomer_2-hydroxyacid_DH"/>
</dbReference>
<dbReference type="InterPro" id="IPR006139">
    <property type="entry name" value="D-isomer_2_OHA_DH_cat_dom"/>
</dbReference>
<dbReference type="InterPro" id="IPR029753">
    <property type="entry name" value="D-isomer_DH_CS"/>
</dbReference>
<dbReference type="InterPro" id="IPR029752">
    <property type="entry name" value="D-isomer_DH_CS1"/>
</dbReference>
<dbReference type="InterPro" id="IPR006140">
    <property type="entry name" value="D-isomer_DH_NAD-bd"/>
</dbReference>
<dbReference type="InterPro" id="IPR023756">
    <property type="entry name" value="Glyo/OHPyrv_Rdtase_B"/>
</dbReference>
<dbReference type="InterPro" id="IPR036291">
    <property type="entry name" value="NAD(P)-bd_dom_sf"/>
</dbReference>
<dbReference type="NCBIfam" id="NF011938">
    <property type="entry name" value="PRK15409.1"/>
    <property type="match status" value="1"/>
</dbReference>
<dbReference type="PANTHER" id="PTHR10996">
    <property type="entry name" value="2-HYDROXYACID DEHYDROGENASE-RELATED"/>
    <property type="match status" value="1"/>
</dbReference>
<dbReference type="PANTHER" id="PTHR10996:SF283">
    <property type="entry name" value="GLYOXYLATE_HYDROXYPYRUVATE REDUCTASE B"/>
    <property type="match status" value="1"/>
</dbReference>
<dbReference type="Pfam" id="PF00389">
    <property type="entry name" value="2-Hacid_dh"/>
    <property type="match status" value="1"/>
</dbReference>
<dbReference type="Pfam" id="PF02826">
    <property type="entry name" value="2-Hacid_dh_C"/>
    <property type="match status" value="1"/>
</dbReference>
<dbReference type="SUPFAM" id="SSF52283">
    <property type="entry name" value="Formate/glycerate dehydrogenase catalytic domain-like"/>
    <property type="match status" value="1"/>
</dbReference>
<dbReference type="SUPFAM" id="SSF51735">
    <property type="entry name" value="NAD(P)-binding Rossmann-fold domains"/>
    <property type="match status" value="1"/>
</dbReference>
<dbReference type="PROSITE" id="PS00065">
    <property type="entry name" value="D_2_HYDROXYACID_DH_1"/>
    <property type="match status" value="1"/>
</dbReference>
<dbReference type="PROSITE" id="PS00671">
    <property type="entry name" value="D_2_HYDROXYACID_DH_3"/>
    <property type="match status" value="1"/>
</dbReference>
<keyword id="KW-0963">Cytoplasm</keyword>
<keyword id="KW-0520">NAD</keyword>
<keyword id="KW-0521">NADP</keyword>
<keyword id="KW-0560">Oxidoreductase</keyword>
<organism>
    <name type="scientific">Yersinia pestis bv. Antiqua (strain Angola)</name>
    <dbReference type="NCBI Taxonomy" id="349746"/>
    <lineage>
        <taxon>Bacteria</taxon>
        <taxon>Pseudomonadati</taxon>
        <taxon>Pseudomonadota</taxon>
        <taxon>Gammaproteobacteria</taxon>
        <taxon>Enterobacterales</taxon>
        <taxon>Yersiniaceae</taxon>
        <taxon>Yersinia</taxon>
    </lineage>
</organism>
<accession>A9R4G6</accession>